<comment type="function">
    <text evidence="1">Catalyzes the condensation of pantoate with beta-alanine in an ATP-dependent reaction via a pantoyl-adenylate intermediate.</text>
</comment>
<comment type="catalytic activity">
    <reaction evidence="1">
        <text>(R)-pantoate + beta-alanine + ATP = (R)-pantothenate + AMP + diphosphate + H(+)</text>
        <dbReference type="Rhea" id="RHEA:10912"/>
        <dbReference type="ChEBI" id="CHEBI:15378"/>
        <dbReference type="ChEBI" id="CHEBI:15980"/>
        <dbReference type="ChEBI" id="CHEBI:29032"/>
        <dbReference type="ChEBI" id="CHEBI:30616"/>
        <dbReference type="ChEBI" id="CHEBI:33019"/>
        <dbReference type="ChEBI" id="CHEBI:57966"/>
        <dbReference type="ChEBI" id="CHEBI:456215"/>
        <dbReference type="EC" id="6.3.2.1"/>
    </reaction>
</comment>
<comment type="pathway">
    <text evidence="1">Cofactor biosynthesis; (R)-pantothenate biosynthesis; (R)-pantothenate from (R)-pantoate and beta-alanine: step 1/1.</text>
</comment>
<comment type="subunit">
    <text evidence="1">Homodimer.</text>
</comment>
<comment type="subcellular location">
    <subcellularLocation>
        <location evidence="1">Cytoplasm</location>
    </subcellularLocation>
</comment>
<comment type="miscellaneous">
    <text evidence="1">The reaction proceeds by a bi uni uni bi ping pong mechanism.</text>
</comment>
<comment type="similarity">
    <text evidence="1">Belongs to the pantothenate synthetase family.</text>
</comment>
<organism>
    <name type="scientific">Burkholderia cenocepacia (strain ATCC BAA-245 / DSM 16553 / LMG 16656 / NCTC 13227 / J2315 / CF5610)</name>
    <name type="common">Burkholderia cepacia (strain J2315)</name>
    <dbReference type="NCBI Taxonomy" id="216591"/>
    <lineage>
        <taxon>Bacteria</taxon>
        <taxon>Pseudomonadati</taxon>
        <taxon>Pseudomonadota</taxon>
        <taxon>Betaproteobacteria</taxon>
        <taxon>Burkholderiales</taxon>
        <taxon>Burkholderiaceae</taxon>
        <taxon>Burkholderia</taxon>
        <taxon>Burkholderia cepacia complex</taxon>
    </lineage>
</organism>
<gene>
    <name evidence="1" type="primary">panC</name>
    <name type="ordered locus">BceJ2315_25910</name>
    <name type="ORF">BCAL2651</name>
</gene>
<evidence type="ECO:0000255" key="1">
    <source>
        <dbReference type="HAMAP-Rule" id="MF_00158"/>
    </source>
</evidence>
<keyword id="KW-0067">ATP-binding</keyword>
<keyword id="KW-0963">Cytoplasm</keyword>
<keyword id="KW-0436">Ligase</keyword>
<keyword id="KW-0547">Nucleotide-binding</keyword>
<keyword id="KW-0566">Pantothenate biosynthesis</keyword>
<protein>
    <recommendedName>
        <fullName evidence="1">Pantothenate synthetase</fullName>
        <shortName evidence="1">PS</shortName>
        <ecNumber evidence="1">6.3.2.1</ecNumber>
    </recommendedName>
    <alternativeName>
        <fullName evidence="1">Pantoate--beta-alanine ligase</fullName>
    </alternativeName>
    <alternativeName>
        <fullName evidence="1">Pantoate-activating enzyme</fullName>
    </alternativeName>
</protein>
<dbReference type="EC" id="6.3.2.1" evidence="1"/>
<dbReference type="EMBL" id="AM747720">
    <property type="protein sequence ID" value="CAR52953.1"/>
    <property type="molecule type" value="Genomic_DNA"/>
</dbReference>
<dbReference type="RefSeq" id="WP_006484042.1">
    <property type="nucleotide sequence ID" value="NC_011000.1"/>
</dbReference>
<dbReference type="SMR" id="B4E8E5"/>
<dbReference type="KEGG" id="bcj:BCAL2651"/>
<dbReference type="eggNOG" id="COG0414">
    <property type="taxonomic scope" value="Bacteria"/>
</dbReference>
<dbReference type="HOGENOM" id="CLU_047148_0_0_4"/>
<dbReference type="BioCyc" id="BCEN216591:G1G1V-2939-MONOMER"/>
<dbReference type="UniPathway" id="UPA00028">
    <property type="reaction ID" value="UER00005"/>
</dbReference>
<dbReference type="Proteomes" id="UP000001035">
    <property type="component" value="Chromosome 1"/>
</dbReference>
<dbReference type="GO" id="GO:0005829">
    <property type="term" value="C:cytosol"/>
    <property type="evidence" value="ECO:0007669"/>
    <property type="project" value="TreeGrafter"/>
</dbReference>
<dbReference type="GO" id="GO:0005524">
    <property type="term" value="F:ATP binding"/>
    <property type="evidence" value="ECO:0007669"/>
    <property type="project" value="UniProtKB-KW"/>
</dbReference>
<dbReference type="GO" id="GO:0004592">
    <property type="term" value="F:pantoate-beta-alanine ligase activity"/>
    <property type="evidence" value="ECO:0007669"/>
    <property type="project" value="UniProtKB-UniRule"/>
</dbReference>
<dbReference type="GO" id="GO:0015940">
    <property type="term" value="P:pantothenate biosynthetic process"/>
    <property type="evidence" value="ECO:0007669"/>
    <property type="project" value="UniProtKB-UniRule"/>
</dbReference>
<dbReference type="CDD" id="cd00560">
    <property type="entry name" value="PanC"/>
    <property type="match status" value="1"/>
</dbReference>
<dbReference type="Gene3D" id="3.40.50.620">
    <property type="entry name" value="HUPs"/>
    <property type="match status" value="1"/>
</dbReference>
<dbReference type="Gene3D" id="3.30.1300.10">
    <property type="entry name" value="Pantoate-beta-alanine ligase, C-terminal domain"/>
    <property type="match status" value="1"/>
</dbReference>
<dbReference type="HAMAP" id="MF_00158">
    <property type="entry name" value="PanC"/>
    <property type="match status" value="1"/>
</dbReference>
<dbReference type="InterPro" id="IPR004821">
    <property type="entry name" value="Cyt_trans-like"/>
</dbReference>
<dbReference type="InterPro" id="IPR003721">
    <property type="entry name" value="Pantoate_ligase"/>
</dbReference>
<dbReference type="InterPro" id="IPR042176">
    <property type="entry name" value="Pantoate_ligase_C"/>
</dbReference>
<dbReference type="InterPro" id="IPR014729">
    <property type="entry name" value="Rossmann-like_a/b/a_fold"/>
</dbReference>
<dbReference type="NCBIfam" id="TIGR00125">
    <property type="entry name" value="cyt_tran_rel"/>
    <property type="match status" value="1"/>
</dbReference>
<dbReference type="NCBIfam" id="TIGR00018">
    <property type="entry name" value="panC"/>
    <property type="match status" value="1"/>
</dbReference>
<dbReference type="PANTHER" id="PTHR21299">
    <property type="entry name" value="CYTIDYLATE KINASE/PANTOATE-BETA-ALANINE LIGASE"/>
    <property type="match status" value="1"/>
</dbReference>
<dbReference type="PANTHER" id="PTHR21299:SF1">
    <property type="entry name" value="PANTOATE--BETA-ALANINE LIGASE"/>
    <property type="match status" value="1"/>
</dbReference>
<dbReference type="Pfam" id="PF02569">
    <property type="entry name" value="Pantoate_ligase"/>
    <property type="match status" value="1"/>
</dbReference>
<dbReference type="SUPFAM" id="SSF52374">
    <property type="entry name" value="Nucleotidylyl transferase"/>
    <property type="match status" value="1"/>
</dbReference>
<name>PANC_BURCJ</name>
<accession>B4E8E5</accession>
<proteinExistence type="inferred from homology"/>
<feature type="chain" id="PRO_1000097035" description="Pantothenate synthetase">
    <location>
        <begin position="1"/>
        <end position="279"/>
    </location>
</feature>
<feature type="active site" description="Proton donor" evidence="1">
    <location>
        <position position="33"/>
    </location>
</feature>
<feature type="binding site" evidence="1">
    <location>
        <begin position="26"/>
        <end position="33"/>
    </location>
    <ligand>
        <name>ATP</name>
        <dbReference type="ChEBI" id="CHEBI:30616"/>
    </ligand>
</feature>
<feature type="binding site" evidence="1">
    <location>
        <position position="57"/>
    </location>
    <ligand>
        <name>(R)-pantoate</name>
        <dbReference type="ChEBI" id="CHEBI:15980"/>
    </ligand>
</feature>
<feature type="binding site" evidence="1">
    <location>
        <position position="57"/>
    </location>
    <ligand>
        <name>beta-alanine</name>
        <dbReference type="ChEBI" id="CHEBI:57966"/>
    </ligand>
</feature>
<feature type="binding site" evidence="1">
    <location>
        <begin position="144"/>
        <end position="147"/>
    </location>
    <ligand>
        <name>ATP</name>
        <dbReference type="ChEBI" id="CHEBI:30616"/>
    </ligand>
</feature>
<feature type="binding site" evidence="1">
    <location>
        <position position="150"/>
    </location>
    <ligand>
        <name>(R)-pantoate</name>
        <dbReference type="ChEBI" id="CHEBI:15980"/>
    </ligand>
</feature>
<feature type="binding site" evidence="1">
    <location>
        <position position="173"/>
    </location>
    <ligand>
        <name>ATP</name>
        <dbReference type="ChEBI" id="CHEBI:30616"/>
    </ligand>
</feature>
<feature type="binding site" evidence="1">
    <location>
        <begin position="181"/>
        <end position="184"/>
    </location>
    <ligand>
        <name>ATP</name>
        <dbReference type="ChEBI" id="CHEBI:30616"/>
    </ligand>
</feature>
<reference key="1">
    <citation type="journal article" date="2009" name="J. Bacteriol.">
        <title>The genome of Burkholderia cenocepacia J2315, an epidemic pathogen of cystic fibrosis patients.</title>
        <authorList>
            <person name="Holden M.T."/>
            <person name="Seth-Smith H.M."/>
            <person name="Crossman L.C."/>
            <person name="Sebaihia M."/>
            <person name="Bentley S.D."/>
            <person name="Cerdeno-Tarraga A.M."/>
            <person name="Thomson N.R."/>
            <person name="Bason N."/>
            <person name="Quail M.A."/>
            <person name="Sharp S."/>
            <person name="Cherevach I."/>
            <person name="Churcher C."/>
            <person name="Goodhead I."/>
            <person name="Hauser H."/>
            <person name="Holroyd N."/>
            <person name="Mungall K."/>
            <person name="Scott P."/>
            <person name="Walker D."/>
            <person name="White B."/>
            <person name="Rose H."/>
            <person name="Iversen P."/>
            <person name="Mil-Homens D."/>
            <person name="Rocha E.P."/>
            <person name="Fialho A.M."/>
            <person name="Baldwin A."/>
            <person name="Dowson C."/>
            <person name="Barrell B.G."/>
            <person name="Govan J.R."/>
            <person name="Vandamme P."/>
            <person name="Hart C.A."/>
            <person name="Mahenthiralingam E."/>
            <person name="Parkhill J."/>
        </authorList>
    </citation>
    <scope>NUCLEOTIDE SEQUENCE [LARGE SCALE GENOMIC DNA]</scope>
    <source>
        <strain>ATCC BAA-245 / DSM 16553 / LMG 16656 / NCTC 13227 / J2315 / CF5610</strain>
    </source>
</reference>
<sequence>MKVISSIQELRDQLRGQNRTAFVPTMGNLHEGHLSLMRLARQHGDPVVASIFVNRLQFGPNEDFDKYPRTLQDDIEKLQQENVYVLFAPTERDMYPEPQEYRVLPPDDLGGILEGEFRPGFFAGVCTVVTKLMSCVQPRVAVFGKKDYQQLMIVRRMCQQLALPVEIVAAETVRDEDGLALSSRNRYLTPDERREAPELAKTLQRVRDSVLGGERDLGKLEQHAHTHLAERGWVPDYIAIRRRANLIAPSAAELEAGEPLVVLAAAKLGATRLIDNLEI</sequence>